<keyword id="KW-0025">Alternative splicing</keyword>
<keyword id="KW-0106">Calcium</keyword>
<keyword id="KW-0119">Carbohydrate metabolism</keyword>
<keyword id="KW-0868">Chloride</keyword>
<keyword id="KW-0903">Direct protein sequencing</keyword>
<keyword id="KW-1015">Disulfide bond</keyword>
<keyword id="KW-0326">Glycosidase</keyword>
<keyword id="KW-0378">Hydrolase</keyword>
<keyword id="KW-0479">Metal-binding</keyword>
<keyword id="KW-1267">Proteomics identification</keyword>
<keyword id="KW-0873">Pyrrolidone carboxylic acid</keyword>
<keyword id="KW-1185">Reference proteome</keyword>
<keyword id="KW-0964">Secreted</keyword>
<keyword id="KW-0732">Signal</keyword>
<sequence>MKFFLLLFTIGFCWAQYSPNTQQGRTSIVHLFEWRWVDIALECERYLAPKGFGGVQVSPPNENVAIHNPFRPWWERYQPVSYKLCTRSGNEDEFRNMVTRCNNVGVRIYVDAVINHMSGNAVSAGTSSTCGSYFNPGSRDFPAVPYSGWDFNDGKCKTGSGDIENYNDATQVRDCRLVGLLDLALEKDYVRSKIAEYMNHLIDIGVAGFRLDASKHMWPGDIKAILDKLHNLNSNWFPAGSKPFIYQEVIDLGGEPIKSSDYFGNGRVTEFKYGAKLGTVIRKWNGEKMSYLKNWGEGWGFMPSDRALVFVDNHDNQRGHGAGGASILTFWDARLYKMAVGFMLAHPYGFTRVMSSYRWPRQFQNGNDVNDWVGPPNNNGVIKEVTINPDTTCGNDWVCEHRWRQIRNMVNFRNVVDGQPFTNWYDNGSNQVAFGRGNRGFIVFNNDDWTFSLTLQTGLPAGTYCDVISGDKINGNCTGIKIYVSDDGKAHFSISNSAEDPFIAIHAESKL</sequence>
<gene>
    <name type="primary">AMY2B</name>
</gene>
<name>AMY2B_HUMAN</name>
<proteinExistence type="evidence at protein level"/>
<organism>
    <name type="scientific">Homo sapiens</name>
    <name type="common">Human</name>
    <dbReference type="NCBI Taxonomy" id="9606"/>
    <lineage>
        <taxon>Eukaryota</taxon>
        <taxon>Metazoa</taxon>
        <taxon>Chordata</taxon>
        <taxon>Craniata</taxon>
        <taxon>Vertebrata</taxon>
        <taxon>Euteleostomi</taxon>
        <taxon>Mammalia</taxon>
        <taxon>Eutheria</taxon>
        <taxon>Euarchontoglires</taxon>
        <taxon>Primates</taxon>
        <taxon>Haplorrhini</taxon>
        <taxon>Catarrhini</taxon>
        <taxon>Hominidae</taxon>
        <taxon>Homo</taxon>
    </lineage>
</organism>
<dbReference type="EC" id="3.2.1.1" evidence="2"/>
<dbReference type="EMBL" id="M24895">
    <property type="protein sequence ID" value="AAA35525.1"/>
    <property type="molecule type" value="mRNA"/>
</dbReference>
<dbReference type="EMBL" id="D90097">
    <property type="protein sequence ID" value="BAA14130.1"/>
    <property type="molecule type" value="Genomic_DNA"/>
</dbReference>
<dbReference type="EMBL" id="AK095605">
    <property type="protein sequence ID" value="BAG53093.1"/>
    <property type="molecule type" value="mRNA"/>
</dbReference>
<dbReference type="EMBL" id="AK127047">
    <property type="protein sequence ID" value="BAG54429.1"/>
    <property type="molecule type" value="mRNA"/>
</dbReference>
<dbReference type="EMBL" id="AC105272">
    <property type="status" value="NOT_ANNOTATED_CDS"/>
    <property type="molecule type" value="Genomic_DNA"/>
</dbReference>
<dbReference type="EMBL" id="CH471097">
    <property type="protein sequence ID" value="EAW72902.1"/>
    <property type="molecule type" value="Genomic_DNA"/>
</dbReference>
<dbReference type="EMBL" id="CH471097">
    <property type="protein sequence ID" value="EAW72903.1"/>
    <property type="molecule type" value="Genomic_DNA"/>
</dbReference>
<dbReference type="EMBL" id="CH471097">
    <property type="protein sequence ID" value="EAW72904.1"/>
    <property type="molecule type" value="Genomic_DNA"/>
</dbReference>
<dbReference type="EMBL" id="BC011179">
    <property type="protein sequence ID" value="AAH11179.1"/>
    <property type="molecule type" value="mRNA"/>
</dbReference>
<dbReference type="EMBL" id="BC020861">
    <property type="protein sequence ID" value="AAH20861.1"/>
    <property type="molecule type" value="mRNA"/>
</dbReference>
<dbReference type="EMBL" id="X07057">
    <property type="protein sequence ID" value="CAA30100.1"/>
    <property type="molecule type" value="Genomic_DNA"/>
</dbReference>
<dbReference type="EMBL" id="M18670">
    <property type="protein sequence ID" value="AAA51725.1"/>
    <property type="molecule type" value="Genomic_DNA"/>
</dbReference>
<dbReference type="CCDS" id="CCDS782.1">
    <molecule id="P19961-1"/>
</dbReference>
<dbReference type="PIR" id="JS0165">
    <property type="entry name" value="ALHU2B"/>
</dbReference>
<dbReference type="RefSeq" id="NP_001373038.1">
    <molecule id="P19961-1"/>
    <property type="nucleotide sequence ID" value="NM_001386109.1"/>
</dbReference>
<dbReference type="RefSeq" id="NP_001374366.1">
    <molecule id="P19961-1"/>
    <property type="nucleotide sequence ID" value="NM_001387437.1"/>
</dbReference>
<dbReference type="RefSeq" id="NP_066188.1">
    <molecule id="P19961-1"/>
    <property type="nucleotide sequence ID" value="NM_020978.4"/>
</dbReference>
<dbReference type="SMR" id="P19961"/>
<dbReference type="BioGRID" id="106777">
    <property type="interactions" value="9"/>
</dbReference>
<dbReference type="FunCoup" id="P19961">
    <property type="interactions" value="117"/>
</dbReference>
<dbReference type="IntAct" id="P19961">
    <property type="interactions" value="9"/>
</dbReference>
<dbReference type="STRING" id="9606.ENSP00000354610"/>
<dbReference type="DrugBank" id="DB01870">
    <property type="generic name" value="1,4-dithio-alpha-D-glucopyranose"/>
</dbReference>
<dbReference type="DrugBank" id="DB02730">
    <property type="generic name" value="4-Methylthio-Alpha-D-Mannose"/>
</dbReference>
<dbReference type="DrugBank" id="DB03092">
    <property type="generic name" value="5-Hydroxymethyl-Chonduritol"/>
</dbReference>
<dbReference type="DrugBank" id="DB03277">
    <property type="generic name" value="alpha-maltotriose"/>
</dbReference>
<dbReference type="DrugBank" id="DB02379">
    <property type="generic name" value="Beta-D-Glucose"/>
</dbReference>
<dbReference type="DrugBank" id="DB03323">
    <property type="generic name" value="Maltose"/>
</dbReference>
<dbReference type="DrugBank" id="DB02218">
    <property type="generic name" value="N-[4-hydroxymethyl-cyclohexan-6-yl-1,2,3-triol]-4,6-dideoxy-4-aminoglucopyranoside"/>
</dbReference>
<dbReference type="DrugBank" id="DB04417">
    <property type="generic name" value="P-Nitrophenol"/>
</dbReference>
<dbReference type="DrugBank" id="DB03088">
    <property type="generic name" value="Pidolic acid"/>
</dbReference>
<dbReference type="CAZy" id="GH13">
    <property type="family name" value="Glycoside Hydrolase Family 13"/>
</dbReference>
<dbReference type="iPTMnet" id="P19961"/>
<dbReference type="PhosphoSitePlus" id="P19961"/>
<dbReference type="BioMuta" id="AMY2B"/>
<dbReference type="DMDM" id="113789"/>
<dbReference type="jPOST" id="P19961"/>
<dbReference type="MassIVE" id="P19961"/>
<dbReference type="PaxDb" id="9606-ENSP00000354610"/>
<dbReference type="PeptideAtlas" id="P19961"/>
<dbReference type="PRIDE" id="P19961"/>
<dbReference type="ProteomicsDB" id="3680"/>
<dbReference type="ProteomicsDB" id="53704">
    <molecule id="P19961-1"/>
</dbReference>
<dbReference type="Pumba" id="P19961"/>
<dbReference type="TopDownProteomics" id="P19961-1">
    <molecule id="P19961-1"/>
</dbReference>
<dbReference type="Antibodypedia" id="34942">
    <property type="antibodies" value="244 antibodies from 27 providers"/>
</dbReference>
<dbReference type="DNASU" id="280"/>
<dbReference type="Ensembl" id="ENST00000361355.8">
    <molecule id="P19961-1"/>
    <property type="protein sequence ID" value="ENSP00000354610.4"/>
    <property type="gene ID" value="ENSG00000240038.8"/>
</dbReference>
<dbReference type="Ensembl" id="ENST00000477657.5">
    <molecule id="P19961-2"/>
    <property type="protein sequence ID" value="ENSP00000433347.1"/>
    <property type="gene ID" value="ENSG00000240038.8"/>
</dbReference>
<dbReference type="Ensembl" id="ENST00000684275.1">
    <molecule id="P19961-1"/>
    <property type="protein sequence ID" value="ENSP00000507176.1"/>
    <property type="gene ID" value="ENSG00000240038.8"/>
</dbReference>
<dbReference type="GeneID" id="280"/>
<dbReference type="KEGG" id="hsa:280"/>
<dbReference type="MANE-Select" id="ENST00000684275.1">
    <property type="protein sequence ID" value="ENSP00000507176.1"/>
    <property type="RefSeq nucleotide sequence ID" value="NM_001387437.1"/>
    <property type="RefSeq protein sequence ID" value="NP_001374366.1"/>
</dbReference>
<dbReference type="UCSC" id="uc001duq.5">
    <molecule id="P19961-1"/>
    <property type="organism name" value="human"/>
</dbReference>
<dbReference type="AGR" id="HGNC:478"/>
<dbReference type="CTD" id="280"/>
<dbReference type="DisGeNET" id="280"/>
<dbReference type="GeneCards" id="AMY2B"/>
<dbReference type="HGNC" id="HGNC:478">
    <property type="gene designation" value="AMY2B"/>
</dbReference>
<dbReference type="HPA" id="ENSG00000240038">
    <property type="expression patterns" value="Tissue enriched (pancreas)"/>
</dbReference>
<dbReference type="MIM" id="104660">
    <property type="type" value="gene"/>
</dbReference>
<dbReference type="neXtProt" id="NX_P19961"/>
<dbReference type="OpenTargets" id="ENSG00000240038"/>
<dbReference type="PharmGKB" id="PA24785"/>
<dbReference type="VEuPathDB" id="HostDB:ENSG00000240038"/>
<dbReference type="eggNOG" id="KOG2212">
    <property type="taxonomic scope" value="Eukaryota"/>
</dbReference>
<dbReference type="GeneTree" id="ENSGT00940000154802"/>
<dbReference type="HOGENOM" id="CLU_013336_2_1_1"/>
<dbReference type="InParanoid" id="P19961"/>
<dbReference type="OMA" id="FRYAYDL"/>
<dbReference type="OrthoDB" id="550577at2759"/>
<dbReference type="PAN-GO" id="P19961">
    <property type="GO annotations" value="3 GO annotations based on evolutionary models"/>
</dbReference>
<dbReference type="PhylomeDB" id="P19961"/>
<dbReference type="TreeFam" id="TF312850"/>
<dbReference type="PathwayCommons" id="P19961"/>
<dbReference type="Reactome" id="R-HSA-189085">
    <property type="pathway name" value="Digestion of dietary carbohydrate"/>
</dbReference>
<dbReference type="SignaLink" id="P19961"/>
<dbReference type="BioGRID-ORCS" id="280">
    <property type="hits" value="12 hits in 1042 CRISPR screens"/>
</dbReference>
<dbReference type="ChiTaRS" id="AMY2B">
    <property type="organism name" value="human"/>
</dbReference>
<dbReference type="GeneWiki" id="AMY2B"/>
<dbReference type="GenomeRNAi" id="280"/>
<dbReference type="Pharos" id="P19961">
    <property type="development level" value="Tbio"/>
</dbReference>
<dbReference type="PRO" id="PR:P19961"/>
<dbReference type="Proteomes" id="UP000005640">
    <property type="component" value="Chromosome 1"/>
</dbReference>
<dbReference type="RNAct" id="P19961">
    <property type="molecule type" value="protein"/>
</dbReference>
<dbReference type="Bgee" id="ENSG00000240038">
    <property type="expression patterns" value="Expressed in body of pancreas and 98 other cell types or tissues"/>
</dbReference>
<dbReference type="ExpressionAtlas" id="P19961">
    <property type="expression patterns" value="baseline and differential"/>
</dbReference>
<dbReference type="GO" id="GO:0070062">
    <property type="term" value="C:extracellular exosome"/>
    <property type="evidence" value="ECO:0007005"/>
    <property type="project" value="UniProtKB"/>
</dbReference>
<dbReference type="GO" id="GO:0005615">
    <property type="term" value="C:extracellular space"/>
    <property type="evidence" value="ECO:0000318"/>
    <property type="project" value="GO_Central"/>
</dbReference>
<dbReference type="GO" id="GO:0004556">
    <property type="term" value="F:alpha-amylase activity"/>
    <property type="evidence" value="ECO:0000250"/>
    <property type="project" value="UniProtKB"/>
</dbReference>
<dbReference type="GO" id="GO:0046872">
    <property type="term" value="F:metal ion binding"/>
    <property type="evidence" value="ECO:0007669"/>
    <property type="project" value="UniProtKB-KW"/>
</dbReference>
<dbReference type="GO" id="GO:0005975">
    <property type="term" value="P:carbohydrate metabolic process"/>
    <property type="evidence" value="ECO:0000318"/>
    <property type="project" value="GO_Central"/>
</dbReference>
<dbReference type="CDD" id="cd11317">
    <property type="entry name" value="AmyAc_bac_euk_AmyA"/>
    <property type="match status" value="1"/>
</dbReference>
<dbReference type="FunFam" id="2.60.40.1180:FF:000020">
    <property type="entry name" value="Pancreatic alpha-amylase"/>
    <property type="match status" value="1"/>
</dbReference>
<dbReference type="FunFam" id="3.20.20.80:FF:000056">
    <property type="entry name" value="Pancreatic alpha-amylase"/>
    <property type="match status" value="1"/>
</dbReference>
<dbReference type="Gene3D" id="3.20.20.80">
    <property type="entry name" value="Glycosidases"/>
    <property type="match status" value="1"/>
</dbReference>
<dbReference type="Gene3D" id="2.60.40.1180">
    <property type="entry name" value="Golgi alpha-mannosidase II"/>
    <property type="match status" value="1"/>
</dbReference>
<dbReference type="InterPro" id="IPR006048">
    <property type="entry name" value="A-amylase/branching_C"/>
</dbReference>
<dbReference type="InterPro" id="IPR031319">
    <property type="entry name" value="A-amylase_C"/>
</dbReference>
<dbReference type="InterPro" id="IPR006046">
    <property type="entry name" value="Alpha_amylase"/>
</dbReference>
<dbReference type="InterPro" id="IPR006047">
    <property type="entry name" value="Glyco_hydro_13_cat_dom"/>
</dbReference>
<dbReference type="InterPro" id="IPR013780">
    <property type="entry name" value="Glyco_hydro_b"/>
</dbReference>
<dbReference type="InterPro" id="IPR017853">
    <property type="entry name" value="Glycoside_hydrolase_SF"/>
</dbReference>
<dbReference type="PANTHER" id="PTHR43447">
    <property type="entry name" value="ALPHA-AMYLASE"/>
    <property type="match status" value="1"/>
</dbReference>
<dbReference type="Pfam" id="PF00128">
    <property type="entry name" value="Alpha-amylase"/>
    <property type="match status" value="1"/>
</dbReference>
<dbReference type="Pfam" id="PF02806">
    <property type="entry name" value="Alpha-amylase_C"/>
    <property type="match status" value="1"/>
</dbReference>
<dbReference type="PRINTS" id="PR00110">
    <property type="entry name" value="ALPHAAMYLASE"/>
</dbReference>
<dbReference type="SMART" id="SM00642">
    <property type="entry name" value="Aamy"/>
    <property type="match status" value="1"/>
</dbReference>
<dbReference type="SMART" id="SM00632">
    <property type="entry name" value="Aamy_C"/>
    <property type="match status" value="1"/>
</dbReference>
<dbReference type="SUPFAM" id="SSF51445">
    <property type="entry name" value="(Trans)glycosidases"/>
    <property type="match status" value="1"/>
</dbReference>
<dbReference type="SUPFAM" id="SSF51011">
    <property type="entry name" value="Glycosyl hydrolase domain"/>
    <property type="match status" value="1"/>
</dbReference>
<comment type="catalytic activity">
    <reaction evidence="2">
        <text>Endohydrolysis of (1-&gt;4)-alpha-D-glucosidic linkages in polysaccharides containing three or more (1-&gt;4)-alpha-linked D-glucose units.</text>
        <dbReference type="EC" id="3.2.1.1"/>
    </reaction>
</comment>
<comment type="cofactor">
    <cofactor evidence="2">
        <name>Ca(2+)</name>
        <dbReference type="ChEBI" id="CHEBI:29108"/>
    </cofactor>
    <text evidence="2">Binds 1 Ca(2+) ion per subunit.</text>
</comment>
<comment type="cofactor">
    <cofactor evidence="2">
        <name>chloride</name>
        <dbReference type="ChEBI" id="CHEBI:17996"/>
    </cofactor>
    <text evidence="2">Binds 1 Cl(-) ion per subunit.</text>
</comment>
<comment type="subunit">
    <text evidence="1">Monomer.</text>
</comment>
<comment type="subcellular location">
    <subcellularLocation>
        <location evidence="1">Secreted</location>
    </subcellularLocation>
</comment>
<comment type="alternative products">
    <event type="alternative splicing"/>
    <isoform>
        <id>P19961-1</id>
        <name>1</name>
        <sequence type="displayed"/>
    </isoform>
    <isoform>
        <id>P19961-2</id>
        <name>2</name>
        <sequence type="described" ref="VSP_056932 VSP_056933"/>
    </isoform>
</comment>
<comment type="similarity">
    <text evidence="4">Belongs to the glycosyl hydrolase 13 family.</text>
</comment>
<feature type="signal peptide">
    <location>
        <begin position="1"/>
        <end position="15"/>
    </location>
</feature>
<feature type="chain" id="PRO_0000001402" description="Alpha-amylase 2B">
    <location>
        <begin position="16"/>
        <end position="511"/>
    </location>
</feature>
<feature type="active site" description="Nucleophile" evidence="2">
    <location>
        <position position="212"/>
    </location>
</feature>
<feature type="active site" description="Proton donor" evidence="2">
    <location>
        <position position="248"/>
    </location>
</feature>
<feature type="binding site" evidence="2">
    <location>
        <position position="115"/>
    </location>
    <ligand>
        <name>Ca(2+)</name>
        <dbReference type="ChEBI" id="CHEBI:29108"/>
    </ligand>
</feature>
<feature type="binding site" evidence="2">
    <location>
        <position position="173"/>
    </location>
    <ligand>
        <name>Ca(2+)</name>
        <dbReference type="ChEBI" id="CHEBI:29108"/>
    </ligand>
</feature>
<feature type="binding site" evidence="2">
    <location>
        <position position="182"/>
    </location>
    <ligand>
        <name>Ca(2+)</name>
        <dbReference type="ChEBI" id="CHEBI:29108"/>
    </ligand>
</feature>
<feature type="binding site" evidence="2">
    <location>
        <position position="210"/>
    </location>
    <ligand>
        <name>chloride</name>
        <dbReference type="ChEBI" id="CHEBI:17996"/>
    </ligand>
</feature>
<feature type="binding site" evidence="2">
    <location>
        <position position="216"/>
    </location>
    <ligand>
        <name>Ca(2+)</name>
        <dbReference type="ChEBI" id="CHEBI:29108"/>
    </ligand>
</feature>
<feature type="binding site" evidence="2">
    <location>
        <position position="313"/>
    </location>
    <ligand>
        <name>chloride</name>
        <dbReference type="ChEBI" id="CHEBI:17996"/>
    </ligand>
</feature>
<feature type="binding site" evidence="2">
    <location>
        <position position="352"/>
    </location>
    <ligand>
        <name>chloride</name>
        <dbReference type="ChEBI" id="CHEBI:17996"/>
    </ligand>
</feature>
<feature type="site" description="Transition state stabilizer" evidence="2">
    <location>
        <position position="315"/>
    </location>
</feature>
<feature type="modified residue" description="Pyrrolidone carboxylic acid" evidence="2">
    <location>
        <position position="16"/>
    </location>
</feature>
<feature type="disulfide bond" evidence="2">
    <location>
        <begin position="43"/>
        <end position="101"/>
    </location>
</feature>
<feature type="disulfide bond" evidence="2">
    <location>
        <begin position="85"/>
        <end position="130"/>
    </location>
</feature>
<feature type="disulfide bond" evidence="2">
    <location>
        <begin position="156"/>
        <end position="175"/>
    </location>
</feature>
<feature type="disulfide bond" evidence="2">
    <location>
        <begin position="393"/>
        <end position="399"/>
    </location>
</feature>
<feature type="disulfide bond" evidence="2">
    <location>
        <begin position="465"/>
        <end position="477"/>
    </location>
</feature>
<feature type="splice variant" id="VSP_056932" description="In isoform 2." evidence="3">
    <original>DVN</original>
    <variation>EHG</variation>
    <location>
        <begin position="368"/>
        <end position="370"/>
    </location>
</feature>
<feature type="splice variant" id="VSP_056933" description="In isoform 2." evidence="3">
    <location>
        <begin position="371"/>
        <end position="511"/>
    </location>
</feature>
<protein>
    <recommendedName>
        <fullName>Alpha-amylase 2B</fullName>
        <ecNumber evidence="2">3.2.1.1</ecNumber>
    </recommendedName>
    <alternativeName>
        <fullName>1,4-alpha-D-glucan glucanohydrolase 2B</fullName>
    </alternativeName>
    <alternativeName>
        <fullName>Carcinoid alpha-amylase</fullName>
    </alternativeName>
</protein>
<reference key="1">
    <citation type="journal article" date="1989" name="Gene">
        <title>A novel type of human alpha-amylase produced in lung carcinoid tumor.</title>
        <authorList>
            <person name="Tomita N."/>
            <person name="Horii A."/>
            <person name="Doi S."/>
            <person name="Yokouchi H."/>
            <person name="Shiosaki K."/>
            <person name="Higashiyama M."/>
            <person name="Matsuura N."/>
            <person name="Ogawa M."/>
            <person name="Mori T."/>
            <person name="Matsubara K."/>
        </authorList>
    </citation>
    <scope>NUCLEOTIDE SEQUENCE [MRNA] (ISOFORM 1)</scope>
</reference>
<reference key="2">
    <citation type="journal article" date="1990" name="Gene">
        <title>Cloning and characterization of a third type of human alpha-amylase gene, AMY2B.</title>
        <authorList>
            <person name="Yokouchi H."/>
            <person name="Horii A."/>
            <person name="Emi M."/>
            <person name="Tomita N."/>
            <person name="Doi S."/>
            <person name="Ogawa M."/>
            <person name="Mori T."/>
            <person name="Matsubara K."/>
        </authorList>
    </citation>
    <scope>NUCLEOTIDE SEQUENCE [GENOMIC DNA]</scope>
</reference>
<reference key="3">
    <citation type="journal article" date="2004" name="Nat. Genet.">
        <title>Complete sequencing and characterization of 21,243 full-length human cDNAs.</title>
        <authorList>
            <person name="Ota T."/>
            <person name="Suzuki Y."/>
            <person name="Nishikawa T."/>
            <person name="Otsuki T."/>
            <person name="Sugiyama T."/>
            <person name="Irie R."/>
            <person name="Wakamatsu A."/>
            <person name="Hayashi K."/>
            <person name="Sato H."/>
            <person name="Nagai K."/>
            <person name="Kimura K."/>
            <person name="Makita H."/>
            <person name="Sekine M."/>
            <person name="Obayashi M."/>
            <person name="Nishi T."/>
            <person name="Shibahara T."/>
            <person name="Tanaka T."/>
            <person name="Ishii S."/>
            <person name="Yamamoto J."/>
            <person name="Saito K."/>
            <person name="Kawai Y."/>
            <person name="Isono Y."/>
            <person name="Nakamura Y."/>
            <person name="Nagahari K."/>
            <person name="Murakami K."/>
            <person name="Yasuda T."/>
            <person name="Iwayanagi T."/>
            <person name="Wagatsuma M."/>
            <person name="Shiratori A."/>
            <person name="Sudo H."/>
            <person name="Hosoiri T."/>
            <person name="Kaku Y."/>
            <person name="Kodaira H."/>
            <person name="Kondo H."/>
            <person name="Sugawara M."/>
            <person name="Takahashi M."/>
            <person name="Kanda K."/>
            <person name="Yokoi T."/>
            <person name="Furuya T."/>
            <person name="Kikkawa E."/>
            <person name="Omura Y."/>
            <person name="Abe K."/>
            <person name="Kamihara K."/>
            <person name="Katsuta N."/>
            <person name="Sato K."/>
            <person name="Tanikawa M."/>
            <person name="Yamazaki M."/>
            <person name="Ninomiya K."/>
            <person name="Ishibashi T."/>
            <person name="Yamashita H."/>
            <person name="Murakawa K."/>
            <person name="Fujimori K."/>
            <person name="Tanai H."/>
            <person name="Kimata M."/>
            <person name="Watanabe M."/>
            <person name="Hiraoka S."/>
            <person name="Chiba Y."/>
            <person name="Ishida S."/>
            <person name="Ono Y."/>
            <person name="Takiguchi S."/>
            <person name="Watanabe S."/>
            <person name="Yosida M."/>
            <person name="Hotuta T."/>
            <person name="Kusano J."/>
            <person name="Kanehori K."/>
            <person name="Takahashi-Fujii A."/>
            <person name="Hara H."/>
            <person name="Tanase T.-O."/>
            <person name="Nomura Y."/>
            <person name="Togiya S."/>
            <person name="Komai F."/>
            <person name="Hara R."/>
            <person name="Takeuchi K."/>
            <person name="Arita M."/>
            <person name="Imose N."/>
            <person name="Musashino K."/>
            <person name="Yuuki H."/>
            <person name="Oshima A."/>
            <person name="Sasaki N."/>
            <person name="Aotsuka S."/>
            <person name="Yoshikawa Y."/>
            <person name="Matsunawa H."/>
            <person name="Ichihara T."/>
            <person name="Shiohata N."/>
            <person name="Sano S."/>
            <person name="Moriya S."/>
            <person name="Momiyama H."/>
            <person name="Satoh N."/>
            <person name="Takami S."/>
            <person name="Terashima Y."/>
            <person name="Suzuki O."/>
            <person name="Nakagawa S."/>
            <person name="Senoh A."/>
            <person name="Mizoguchi H."/>
            <person name="Goto Y."/>
            <person name="Shimizu F."/>
            <person name="Wakebe H."/>
            <person name="Hishigaki H."/>
            <person name="Watanabe T."/>
            <person name="Sugiyama A."/>
            <person name="Takemoto M."/>
            <person name="Kawakami B."/>
            <person name="Yamazaki M."/>
            <person name="Watanabe K."/>
            <person name="Kumagai A."/>
            <person name="Itakura S."/>
            <person name="Fukuzumi Y."/>
            <person name="Fujimori Y."/>
            <person name="Komiyama M."/>
            <person name="Tashiro H."/>
            <person name="Tanigami A."/>
            <person name="Fujiwara T."/>
            <person name="Ono T."/>
            <person name="Yamada K."/>
            <person name="Fujii Y."/>
            <person name="Ozaki K."/>
            <person name="Hirao M."/>
            <person name="Ohmori Y."/>
            <person name="Kawabata A."/>
            <person name="Hikiji T."/>
            <person name="Kobatake N."/>
            <person name="Inagaki H."/>
            <person name="Ikema Y."/>
            <person name="Okamoto S."/>
            <person name="Okitani R."/>
            <person name="Kawakami T."/>
            <person name="Noguchi S."/>
            <person name="Itoh T."/>
            <person name="Shigeta K."/>
            <person name="Senba T."/>
            <person name="Matsumura K."/>
            <person name="Nakajima Y."/>
            <person name="Mizuno T."/>
            <person name="Morinaga M."/>
            <person name="Sasaki M."/>
            <person name="Togashi T."/>
            <person name="Oyama M."/>
            <person name="Hata H."/>
            <person name="Watanabe M."/>
            <person name="Komatsu T."/>
            <person name="Mizushima-Sugano J."/>
            <person name="Satoh T."/>
            <person name="Shirai Y."/>
            <person name="Takahashi Y."/>
            <person name="Nakagawa K."/>
            <person name="Okumura K."/>
            <person name="Nagase T."/>
            <person name="Nomura N."/>
            <person name="Kikuchi H."/>
            <person name="Masuho Y."/>
            <person name="Yamashita R."/>
            <person name="Nakai K."/>
            <person name="Yada T."/>
            <person name="Nakamura Y."/>
            <person name="Ohara O."/>
            <person name="Isogai T."/>
            <person name="Sugano S."/>
        </authorList>
    </citation>
    <scope>NUCLEOTIDE SEQUENCE [LARGE SCALE MRNA] (ISOFORMS 1 AND 2)</scope>
    <source>
        <tissue>Brain</tissue>
    </source>
</reference>
<reference key="4">
    <citation type="journal article" date="2006" name="Nature">
        <title>The DNA sequence and biological annotation of human chromosome 1.</title>
        <authorList>
            <person name="Gregory S.G."/>
            <person name="Barlow K.F."/>
            <person name="McLay K.E."/>
            <person name="Kaul R."/>
            <person name="Swarbreck D."/>
            <person name="Dunham A."/>
            <person name="Scott C.E."/>
            <person name="Howe K.L."/>
            <person name="Woodfine K."/>
            <person name="Spencer C.C.A."/>
            <person name="Jones M.C."/>
            <person name="Gillson C."/>
            <person name="Searle S."/>
            <person name="Zhou Y."/>
            <person name="Kokocinski F."/>
            <person name="McDonald L."/>
            <person name="Evans R."/>
            <person name="Phillips K."/>
            <person name="Atkinson A."/>
            <person name="Cooper R."/>
            <person name="Jones C."/>
            <person name="Hall R.E."/>
            <person name="Andrews T.D."/>
            <person name="Lloyd C."/>
            <person name="Ainscough R."/>
            <person name="Almeida J.P."/>
            <person name="Ambrose K.D."/>
            <person name="Anderson F."/>
            <person name="Andrew R.W."/>
            <person name="Ashwell R.I.S."/>
            <person name="Aubin K."/>
            <person name="Babbage A.K."/>
            <person name="Bagguley C.L."/>
            <person name="Bailey J."/>
            <person name="Beasley H."/>
            <person name="Bethel G."/>
            <person name="Bird C.P."/>
            <person name="Bray-Allen S."/>
            <person name="Brown J.Y."/>
            <person name="Brown A.J."/>
            <person name="Buckley D."/>
            <person name="Burton J."/>
            <person name="Bye J."/>
            <person name="Carder C."/>
            <person name="Chapman J.C."/>
            <person name="Clark S.Y."/>
            <person name="Clarke G."/>
            <person name="Clee C."/>
            <person name="Cobley V."/>
            <person name="Collier R.E."/>
            <person name="Corby N."/>
            <person name="Coville G.J."/>
            <person name="Davies J."/>
            <person name="Deadman R."/>
            <person name="Dunn M."/>
            <person name="Earthrowl M."/>
            <person name="Ellington A.G."/>
            <person name="Errington H."/>
            <person name="Frankish A."/>
            <person name="Frankland J."/>
            <person name="French L."/>
            <person name="Garner P."/>
            <person name="Garnett J."/>
            <person name="Gay L."/>
            <person name="Ghori M.R.J."/>
            <person name="Gibson R."/>
            <person name="Gilby L.M."/>
            <person name="Gillett W."/>
            <person name="Glithero R.J."/>
            <person name="Grafham D.V."/>
            <person name="Griffiths C."/>
            <person name="Griffiths-Jones S."/>
            <person name="Grocock R."/>
            <person name="Hammond S."/>
            <person name="Harrison E.S.I."/>
            <person name="Hart E."/>
            <person name="Haugen E."/>
            <person name="Heath P.D."/>
            <person name="Holmes S."/>
            <person name="Holt K."/>
            <person name="Howden P.J."/>
            <person name="Hunt A.R."/>
            <person name="Hunt S.E."/>
            <person name="Hunter G."/>
            <person name="Isherwood J."/>
            <person name="James R."/>
            <person name="Johnson C."/>
            <person name="Johnson D."/>
            <person name="Joy A."/>
            <person name="Kay M."/>
            <person name="Kershaw J.K."/>
            <person name="Kibukawa M."/>
            <person name="Kimberley A.M."/>
            <person name="King A."/>
            <person name="Knights A.J."/>
            <person name="Lad H."/>
            <person name="Laird G."/>
            <person name="Lawlor S."/>
            <person name="Leongamornlert D.A."/>
            <person name="Lloyd D.M."/>
            <person name="Loveland J."/>
            <person name="Lovell J."/>
            <person name="Lush M.J."/>
            <person name="Lyne R."/>
            <person name="Martin S."/>
            <person name="Mashreghi-Mohammadi M."/>
            <person name="Matthews L."/>
            <person name="Matthews N.S.W."/>
            <person name="McLaren S."/>
            <person name="Milne S."/>
            <person name="Mistry S."/>
            <person name="Moore M.J.F."/>
            <person name="Nickerson T."/>
            <person name="O'Dell C.N."/>
            <person name="Oliver K."/>
            <person name="Palmeiri A."/>
            <person name="Palmer S.A."/>
            <person name="Parker A."/>
            <person name="Patel D."/>
            <person name="Pearce A.V."/>
            <person name="Peck A.I."/>
            <person name="Pelan S."/>
            <person name="Phelps K."/>
            <person name="Phillimore B.J."/>
            <person name="Plumb R."/>
            <person name="Rajan J."/>
            <person name="Raymond C."/>
            <person name="Rouse G."/>
            <person name="Saenphimmachak C."/>
            <person name="Sehra H.K."/>
            <person name="Sheridan E."/>
            <person name="Shownkeen R."/>
            <person name="Sims S."/>
            <person name="Skuce C.D."/>
            <person name="Smith M."/>
            <person name="Steward C."/>
            <person name="Subramanian S."/>
            <person name="Sycamore N."/>
            <person name="Tracey A."/>
            <person name="Tromans A."/>
            <person name="Van Helmond Z."/>
            <person name="Wall M."/>
            <person name="Wallis J.M."/>
            <person name="White S."/>
            <person name="Whitehead S.L."/>
            <person name="Wilkinson J.E."/>
            <person name="Willey D.L."/>
            <person name="Williams H."/>
            <person name="Wilming L."/>
            <person name="Wray P.W."/>
            <person name="Wu Z."/>
            <person name="Coulson A."/>
            <person name="Vaudin M."/>
            <person name="Sulston J.E."/>
            <person name="Durbin R.M."/>
            <person name="Hubbard T."/>
            <person name="Wooster R."/>
            <person name="Dunham I."/>
            <person name="Carter N.P."/>
            <person name="McVean G."/>
            <person name="Ross M.T."/>
            <person name="Harrow J."/>
            <person name="Olson M.V."/>
            <person name="Beck S."/>
            <person name="Rogers J."/>
            <person name="Bentley D.R."/>
        </authorList>
    </citation>
    <scope>NUCLEOTIDE SEQUENCE [LARGE SCALE GENOMIC DNA]</scope>
</reference>
<reference key="5">
    <citation type="submission" date="2005-09" db="EMBL/GenBank/DDBJ databases">
        <authorList>
            <person name="Mural R.J."/>
            <person name="Istrail S."/>
            <person name="Sutton G.G."/>
            <person name="Florea L."/>
            <person name="Halpern A.L."/>
            <person name="Mobarry C.M."/>
            <person name="Lippert R."/>
            <person name="Walenz B."/>
            <person name="Shatkay H."/>
            <person name="Dew I."/>
            <person name="Miller J.R."/>
            <person name="Flanigan M.J."/>
            <person name="Edwards N.J."/>
            <person name="Bolanos R."/>
            <person name="Fasulo D."/>
            <person name="Halldorsson B.V."/>
            <person name="Hannenhalli S."/>
            <person name="Turner R."/>
            <person name="Yooseph S."/>
            <person name="Lu F."/>
            <person name="Nusskern D.R."/>
            <person name="Shue B.C."/>
            <person name="Zheng X.H."/>
            <person name="Zhong F."/>
            <person name="Delcher A.L."/>
            <person name="Huson D.H."/>
            <person name="Kravitz S.A."/>
            <person name="Mouchard L."/>
            <person name="Reinert K."/>
            <person name="Remington K.A."/>
            <person name="Clark A.G."/>
            <person name="Waterman M.S."/>
            <person name="Eichler E.E."/>
            <person name="Adams M.D."/>
            <person name="Hunkapiller M.W."/>
            <person name="Myers E.W."/>
            <person name="Venter J.C."/>
        </authorList>
    </citation>
    <scope>NUCLEOTIDE SEQUENCE [LARGE SCALE GENOMIC DNA]</scope>
</reference>
<reference key="6">
    <citation type="journal article" date="2004" name="Genome Res.">
        <title>The status, quality, and expansion of the NIH full-length cDNA project: the Mammalian Gene Collection (MGC).</title>
        <authorList>
            <consortium name="The MGC Project Team"/>
        </authorList>
    </citation>
    <scope>NUCLEOTIDE SEQUENCE [LARGE SCALE MRNA] (ISOFORM 1)</scope>
    <source>
        <tissue>Brain</tissue>
        <tissue>Kidney</tissue>
    </source>
</reference>
<reference key="7">
    <citation type="journal article" date="1988" name="Mol. Cell. Biol.">
        <title>Concerted evolution of human amylase genes.</title>
        <authorList>
            <person name="Gumucio D.L."/>
            <person name="Wiebauer K."/>
            <person name="Caldwell R.M."/>
            <person name="Samuelson L.C."/>
            <person name="Meisler M.H."/>
        </authorList>
    </citation>
    <scope>NUCLEOTIDE SEQUENCE [GENOMIC DNA] OF 1-56</scope>
</reference>
<reference key="8">
    <citation type="journal article" date="1988" name="Nucleic Acids Res.">
        <title>Human pancreatic amylase is encoded by two different genes.</title>
        <authorList>
            <person name="Groot P.C."/>
            <person name="Bleeker M.J."/>
            <person name="Pronk J.C."/>
            <person name="Arwert F."/>
            <person name="Mager W.H."/>
            <person name="Planta R.J."/>
            <person name="Eriksson A.W."/>
            <person name="Frants R.R."/>
        </authorList>
    </citation>
    <scope>NUCLEOTIDE SEQUENCE [GENOMIC DNA] OF 1-56</scope>
    <source>
        <tissue>Pancreas</tissue>
    </source>
</reference>
<reference key="9">
    <citation type="journal article" date="1993" name="Biochim. Biophys. Acta">
        <title>Identification of the characteristic amino-acid sequence for human alpha-amylase encoded by the AMY2B gene.</title>
        <authorList>
            <person name="Omichi K."/>
            <person name="Hase S."/>
        </authorList>
    </citation>
    <scope>PARTIAL PROTEIN SEQUENCE</scope>
    <source>
        <tissue>Urine</tissue>
    </source>
</reference>
<evidence type="ECO:0000250" key="1"/>
<evidence type="ECO:0000250" key="2">
    <source>
        <dbReference type="UniProtKB" id="P04746"/>
    </source>
</evidence>
<evidence type="ECO:0000303" key="3">
    <source>
    </source>
</evidence>
<evidence type="ECO:0000305" key="4"/>
<accession>P19961</accession>
<accession>B3KTI1</accession>
<accession>B3KXB7</accession>
<accession>D3DT76</accession>
<accession>Q9UBH3</accession>